<reference key="1">
    <citation type="journal article" date="2005" name="J. Bacteriol.">
        <title>Insights on evolution of virulence and resistance from the complete genome analysis of an early methicillin-resistant Staphylococcus aureus strain and a biofilm-producing methicillin-resistant Staphylococcus epidermidis strain.</title>
        <authorList>
            <person name="Gill S.R."/>
            <person name="Fouts D.E."/>
            <person name="Archer G.L."/>
            <person name="Mongodin E.F."/>
            <person name="DeBoy R.T."/>
            <person name="Ravel J."/>
            <person name="Paulsen I.T."/>
            <person name="Kolonay J.F."/>
            <person name="Brinkac L.M."/>
            <person name="Beanan M.J."/>
            <person name="Dodson R.J."/>
            <person name="Daugherty S.C."/>
            <person name="Madupu R."/>
            <person name="Angiuoli S.V."/>
            <person name="Durkin A.S."/>
            <person name="Haft D.H."/>
            <person name="Vamathevan J.J."/>
            <person name="Khouri H."/>
            <person name="Utterback T.R."/>
            <person name="Lee C."/>
            <person name="Dimitrov G."/>
            <person name="Jiang L."/>
            <person name="Qin H."/>
            <person name="Weidman J."/>
            <person name="Tran K."/>
            <person name="Kang K.H."/>
            <person name="Hance I.R."/>
            <person name="Nelson K.E."/>
            <person name="Fraser C.M."/>
        </authorList>
    </citation>
    <scope>NUCLEOTIDE SEQUENCE [LARGE SCALE GENOMIC DNA]</scope>
    <source>
        <strain>COL</strain>
    </source>
</reference>
<name>Y530_STAAC</name>
<comment type="similarity">
    <text evidence="2">Belongs to the UPF0213 family.</text>
</comment>
<dbReference type="EMBL" id="CP000046">
    <property type="protein sequence ID" value="AAW37649.1"/>
    <property type="molecule type" value="Genomic_DNA"/>
</dbReference>
<dbReference type="RefSeq" id="WP_000377064.1">
    <property type="nucleotide sequence ID" value="NZ_JBGOFO010000012.1"/>
</dbReference>
<dbReference type="SMR" id="Q5HII9"/>
<dbReference type="KEGG" id="sac:SACOL0530"/>
<dbReference type="HOGENOM" id="CLU_135650_0_3_9"/>
<dbReference type="Proteomes" id="UP000000530">
    <property type="component" value="Chromosome"/>
</dbReference>
<dbReference type="CDD" id="cd10456">
    <property type="entry name" value="GIY-YIG_UPF0213"/>
    <property type="match status" value="1"/>
</dbReference>
<dbReference type="Gene3D" id="3.40.1440.10">
    <property type="entry name" value="GIY-YIG endonuclease"/>
    <property type="match status" value="1"/>
</dbReference>
<dbReference type="InterPro" id="IPR000305">
    <property type="entry name" value="GIY-YIG_endonuc"/>
</dbReference>
<dbReference type="InterPro" id="IPR035901">
    <property type="entry name" value="GIY-YIG_endonuc_sf"/>
</dbReference>
<dbReference type="InterPro" id="IPR050190">
    <property type="entry name" value="UPF0213_domain"/>
</dbReference>
<dbReference type="PANTHER" id="PTHR34477">
    <property type="entry name" value="UPF0213 PROTEIN YHBQ"/>
    <property type="match status" value="1"/>
</dbReference>
<dbReference type="PANTHER" id="PTHR34477:SF1">
    <property type="entry name" value="UPF0213 PROTEIN YHBQ"/>
    <property type="match status" value="1"/>
</dbReference>
<dbReference type="Pfam" id="PF01541">
    <property type="entry name" value="GIY-YIG"/>
    <property type="match status" value="1"/>
</dbReference>
<dbReference type="SMART" id="SM00465">
    <property type="entry name" value="GIYc"/>
    <property type="match status" value="1"/>
</dbReference>
<dbReference type="SUPFAM" id="SSF82771">
    <property type="entry name" value="GIY-YIG endonuclease"/>
    <property type="match status" value="1"/>
</dbReference>
<dbReference type="PROSITE" id="PS50164">
    <property type="entry name" value="GIY_YIG"/>
    <property type="match status" value="1"/>
</dbReference>
<gene>
    <name type="ordered locus">SACOL0530</name>
</gene>
<feature type="chain" id="PRO_0000161380" description="UPF0213 protein SACOL0530">
    <location>
        <begin position="1"/>
        <end position="82"/>
    </location>
</feature>
<feature type="domain" description="GIY-YIG" evidence="1">
    <location>
        <begin position="2"/>
        <end position="77"/>
    </location>
</feature>
<organism>
    <name type="scientific">Staphylococcus aureus (strain COL)</name>
    <dbReference type="NCBI Taxonomy" id="93062"/>
    <lineage>
        <taxon>Bacteria</taxon>
        <taxon>Bacillati</taxon>
        <taxon>Bacillota</taxon>
        <taxon>Bacilli</taxon>
        <taxon>Bacillales</taxon>
        <taxon>Staphylococcaceae</taxon>
        <taxon>Staphylococcus</taxon>
    </lineage>
</organism>
<protein>
    <recommendedName>
        <fullName>UPF0213 protein SACOL0530</fullName>
    </recommendedName>
</protein>
<accession>Q5HII9</accession>
<sequence>MDSHFVYIVKCSDGSLYTGYAKDVNARVEKHNRGQGAKYTKVRRPVHLVYQEMYETKSEALKREYEIKTYTRQKKLRLIKER</sequence>
<proteinExistence type="inferred from homology"/>
<evidence type="ECO:0000255" key="1">
    <source>
        <dbReference type="PROSITE-ProRule" id="PRU00977"/>
    </source>
</evidence>
<evidence type="ECO:0000305" key="2"/>